<dbReference type="EMBL" id="BC091236">
    <property type="protein sequence ID" value="AAH91236.1"/>
    <property type="molecule type" value="mRNA"/>
</dbReference>
<dbReference type="RefSeq" id="NP_001020186.1">
    <property type="nucleotide sequence ID" value="NM_001025015.1"/>
</dbReference>
<dbReference type="FunCoup" id="Q5BK22">
    <property type="interactions" value="1705"/>
</dbReference>
<dbReference type="STRING" id="10116.ENSRNOP00000002797"/>
<dbReference type="PhosphoSitePlus" id="Q5BK22"/>
<dbReference type="PaxDb" id="10116-ENSRNOP00000002797"/>
<dbReference type="Ensembl" id="ENSRNOT00000002797.5">
    <property type="protein sequence ID" value="ENSRNOP00000002797.3"/>
    <property type="gene ID" value="ENSRNOG00000002044.6"/>
</dbReference>
<dbReference type="GeneID" id="360714"/>
<dbReference type="KEGG" id="rno:360714"/>
<dbReference type="UCSC" id="RGD:1310025">
    <property type="organism name" value="rat"/>
</dbReference>
<dbReference type="AGR" id="RGD:1310025"/>
<dbReference type="CTD" id="29083"/>
<dbReference type="RGD" id="1310025">
    <property type="gene designation" value="Gtpbp8"/>
</dbReference>
<dbReference type="eggNOG" id="KOG2486">
    <property type="taxonomic scope" value="Eukaryota"/>
</dbReference>
<dbReference type="GeneTree" id="ENSGT00390000001083"/>
<dbReference type="HOGENOM" id="CLU_033732_5_0_1"/>
<dbReference type="InParanoid" id="Q5BK22"/>
<dbReference type="OMA" id="RMDHAPP"/>
<dbReference type="OrthoDB" id="391988at2759"/>
<dbReference type="PhylomeDB" id="Q5BK22"/>
<dbReference type="TreeFam" id="TF331089"/>
<dbReference type="PRO" id="PR:Q5BK22"/>
<dbReference type="Proteomes" id="UP000002494">
    <property type="component" value="Chromosome 11"/>
</dbReference>
<dbReference type="Bgee" id="ENSRNOG00000002044">
    <property type="expression patterns" value="Expressed in quadriceps femoris and 19 other cell types or tissues"/>
</dbReference>
<dbReference type="GO" id="GO:0005739">
    <property type="term" value="C:mitochondrion"/>
    <property type="evidence" value="ECO:0000318"/>
    <property type="project" value="GO_Central"/>
</dbReference>
<dbReference type="GO" id="GO:0005525">
    <property type="term" value="F:GTP binding"/>
    <property type="evidence" value="ECO:0007669"/>
    <property type="project" value="UniProtKB-KW"/>
</dbReference>
<dbReference type="GO" id="GO:0046872">
    <property type="term" value="F:metal ion binding"/>
    <property type="evidence" value="ECO:0007669"/>
    <property type="project" value="UniProtKB-KW"/>
</dbReference>
<dbReference type="CDD" id="cd01876">
    <property type="entry name" value="YihA_EngB"/>
    <property type="match status" value="1"/>
</dbReference>
<dbReference type="FunFam" id="3.40.50.300:FF:000857">
    <property type="entry name" value="GTP-binding protein 8 isoform X1"/>
    <property type="match status" value="1"/>
</dbReference>
<dbReference type="Gene3D" id="3.40.50.300">
    <property type="entry name" value="P-loop containing nucleotide triphosphate hydrolases"/>
    <property type="match status" value="1"/>
</dbReference>
<dbReference type="HAMAP" id="MF_00321">
    <property type="entry name" value="GTPase_EngB"/>
    <property type="match status" value="1"/>
</dbReference>
<dbReference type="InterPro" id="IPR052279">
    <property type="entry name" value="EngB_GTPase"/>
</dbReference>
<dbReference type="InterPro" id="IPR030393">
    <property type="entry name" value="G_ENGB_dom"/>
</dbReference>
<dbReference type="InterPro" id="IPR006073">
    <property type="entry name" value="GTP-bd"/>
</dbReference>
<dbReference type="InterPro" id="IPR019987">
    <property type="entry name" value="GTP-bd_ribosome_bio_YsxC"/>
</dbReference>
<dbReference type="InterPro" id="IPR027417">
    <property type="entry name" value="P-loop_NTPase"/>
</dbReference>
<dbReference type="NCBIfam" id="TIGR03598">
    <property type="entry name" value="GTPase_YsxC"/>
    <property type="match status" value="1"/>
</dbReference>
<dbReference type="PANTHER" id="PTHR46498">
    <property type="entry name" value="GTP-BINDING PROTEIN 8"/>
    <property type="match status" value="1"/>
</dbReference>
<dbReference type="PANTHER" id="PTHR46498:SF1">
    <property type="entry name" value="GTP-BINDING PROTEIN 8"/>
    <property type="match status" value="1"/>
</dbReference>
<dbReference type="Pfam" id="PF01926">
    <property type="entry name" value="MMR_HSR1"/>
    <property type="match status" value="1"/>
</dbReference>
<dbReference type="SUPFAM" id="SSF52540">
    <property type="entry name" value="P-loop containing nucleoside triphosphate hydrolases"/>
    <property type="match status" value="1"/>
</dbReference>
<dbReference type="PROSITE" id="PS51706">
    <property type="entry name" value="G_ENGB"/>
    <property type="match status" value="1"/>
</dbReference>
<feature type="chain" id="PRO_0000338614" description="GTP-binding protein 8">
    <location>
        <begin position="1"/>
        <end position="285"/>
    </location>
</feature>
<feature type="domain" description="EngB-type G">
    <location>
        <begin position="110"/>
        <end position="283"/>
    </location>
</feature>
<feature type="binding site" evidence="1">
    <location>
        <begin position="118"/>
        <end position="125"/>
    </location>
    <ligand>
        <name>GTP</name>
        <dbReference type="ChEBI" id="CHEBI:37565"/>
    </ligand>
</feature>
<feature type="binding site" evidence="1">
    <location>
        <position position="125"/>
    </location>
    <ligand>
        <name>Mg(2+)</name>
        <dbReference type="ChEBI" id="CHEBI:18420"/>
    </ligand>
</feature>
<feature type="binding site" evidence="1">
    <location>
        <begin position="147"/>
        <end position="151"/>
    </location>
    <ligand>
        <name>GTP</name>
        <dbReference type="ChEBI" id="CHEBI:37565"/>
    </ligand>
</feature>
<feature type="binding site" evidence="1">
    <location>
        <position position="149"/>
    </location>
    <ligand>
        <name>Mg(2+)</name>
        <dbReference type="ChEBI" id="CHEBI:18420"/>
    </ligand>
</feature>
<feature type="binding site" evidence="1">
    <location>
        <begin position="165"/>
        <end position="168"/>
    </location>
    <ligand>
        <name>GTP</name>
        <dbReference type="ChEBI" id="CHEBI:37565"/>
    </ligand>
</feature>
<feature type="binding site" evidence="1">
    <location>
        <begin position="227"/>
        <end position="230"/>
    </location>
    <ligand>
        <name>GTP</name>
        <dbReference type="ChEBI" id="CHEBI:37565"/>
    </ligand>
</feature>
<feature type="binding site" evidence="1">
    <location>
        <begin position="262"/>
        <end position="264"/>
    </location>
    <ligand>
        <name>GTP</name>
        <dbReference type="ChEBI" id="CHEBI:37565"/>
    </ligand>
</feature>
<name>GTPB8_RAT</name>
<evidence type="ECO:0000250" key="1"/>
<evidence type="ECO:0000305" key="2"/>
<keyword id="KW-0342">GTP-binding</keyword>
<keyword id="KW-0460">Magnesium</keyword>
<keyword id="KW-0479">Metal-binding</keyword>
<keyword id="KW-0547">Nucleotide-binding</keyword>
<keyword id="KW-1185">Reference proteome</keyword>
<sequence>MAATRLWHRTGRLLEIASAFGPWPGVYSTSPAFAEVLRMPQKQLRKVVYPLRELEQHLVTDSRPGLIEQRLFDPSLEDIGRAESVFAATVRNRIEYLSSAVRLDHAPSLRQPEVCFIGRSNVGKSSLIKALFSMAPDVEVRISKKPGHTKKMNFFKVGKHFTLVDMPGYGYRAPEDFVDMVETYLKERNNLKRTFLLVDSVVGITKLDNIAIEMCEEFALPYVMILTKIDKSSKGYLLKQVLQIQEFVNTQTQGCFPQLFPISAVTYSGVHLLKCFIADITGSLK</sequence>
<reference key="1">
    <citation type="journal article" date="2004" name="Genome Res.">
        <title>The status, quality, and expansion of the NIH full-length cDNA project: the Mammalian Gene Collection (MGC).</title>
        <authorList>
            <consortium name="The MGC Project Team"/>
        </authorList>
    </citation>
    <scope>NUCLEOTIDE SEQUENCE [LARGE SCALE MRNA]</scope>
    <source>
        <tissue>Liver</tissue>
    </source>
</reference>
<protein>
    <recommendedName>
        <fullName>GTP-binding protein 8</fullName>
    </recommendedName>
</protein>
<proteinExistence type="evidence at transcript level"/>
<accession>Q5BK22</accession>
<organism>
    <name type="scientific">Rattus norvegicus</name>
    <name type="common">Rat</name>
    <dbReference type="NCBI Taxonomy" id="10116"/>
    <lineage>
        <taxon>Eukaryota</taxon>
        <taxon>Metazoa</taxon>
        <taxon>Chordata</taxon>
        <taxon>Craniata</taxon>
        <taxon>Vertebrata</taxon>
        <taxon>Euteleostomi</taxon>
        <taxon>Mammalia</taxon>
        <taxon>Eutheria</taxon>
        <taxon>Euarchontoglires</taxon>
        <taxon>Glires</taxon>
        <taxon>Rodentia</taxon>
        <taxon>Myomorpha</taxon>
        <taxon>Muroidea</taxon>
        <taxon>Muridae</taxon>
        <taxon>Murinae</taxon>
        <taxon>Rattus</taxon>
    </lineage>
</organism>
<comment type="cofactor">
    <cofactor evidence="1">
        <name>Mg(2+)</name>
        <dbReference type="ChEBI" id="CHEBI:18420"/>
    </cofactor>
</comment>
<comment type="similarity">
    <text evidence="2">Belongs to the TRAFAC class TrmE-Era-EngA-EngB-Septin-like GTPase superfamily. EngB GTPase family.</text>
</comment>
<gene>
    <name type="primary">Gtpbp8</name>
</gene>